<keyword id="KW-0413">Isomerase</keyword>
<keyword id="KW-1185">Reference proteome</keyword>
<gene>
    <name evidence="1" type="primary">rpiA</name>
    <name type="ordered locus">Plav_1094</name>
</gene>
<evidence type="ECO:0000255" key="1">
    <source>
        <dbReference type="HAMAP-Rule" id="MF_00170"/>
    </source>
</evidence>
<proteinExistence type="inferred from homology"/>
<accession>A7HS32</accession>
<sequence>MNADDQKKAAAVRALEFVKPGMKLGMGTGSTAEHFVRALGEKVKAGLDIVGVPTSERTAKLAASLGIPLTNLDDTPHLDITVDGADELDGKLRLIKGGGGALLREKIVATASDRMIVIADASKLVKTLGSFPLPVEVIPFGSAVTARKIAEVASAHGCTGKMSRRADEYGEPFFTDSENFIYDCAFGSIPDPDGLSAALNRIPGVVDNGLFIGIAAMAIVGTDKGTDIIEA</sequence>
<protein>
    <recommendedName>
        <fullName evidence="1">Ribose-5-phosphate isomerase A</fullName>
        <ecNumber evidence="1">5.3.1.6</ecNumber>
    </recommendedName>
    <alternativeName>
        <fullName evidence="1">Phosphoriboisomerase A</fullName>
        <shortName evidence="1">PRI</shortName>
    </alternativeName>
</protein>
<dbReference type="EC" id="5.3.1.6" evidence="1"/>
<dbReference type="EMBL" id="CP000774">
    <property type="protein sequence ID" value="ABS62715.1"/>
    <property type="molecule type" value="Genomic_DNA"/>
</dbReference>
<dbReference type="RefSeq" id="WP_012109971.1">
    <property type="nucleotide sequence ID" value="NC_009719.1"/>
</dbReference>
<dbReference type="SMR" id="A7HS32"/>
<dbReference type="STRING" id="402881.Plav_1094"/>
<dbReference type="KEGG" id="pla:Plav_1094"/>
<dbReference type="eggNOG" id="COG0120">
    <property type="taxonomic scope" value="Bacteria"/>
</dbReference>
<dbReference type="HOGENOM" id="CLU_056590_1_0_5"/>
<dbReference type="OrthoDB" id="5870696at2"/>
<dbReference type="UniPathway" id="UPA00115">
    <property type="reaction ID" value="UER00412"/>
</dbReference>
<dbReference type="Proteomes" id="UP000006377">
    <property type="component" value="Chromosome"/>
</dbReference>
<dbReference type="GO" id="GO:0004751">
    <property type="term" value="F:ribose-5-phosphate isomerase activity"/>
    <property type="evidence" value="ECO:0007669"/>
    <property type="project" value="UniProtKB-UniRule"/>
</dbReference>
<dbReference type="GO" id="GO:0009052">
    <property type="term" value="P:pentose-phosphate shunt, non-oxidative branch"/>
    <property type="evidence" value="ECO:0007669"/>
    <property type="project" value="UniProtKB-UniRule"/>
</dbReference>
<dbReference type="CDD" id="cd01398">
    <property type="entry name" value="RPI_A"/>
    <property type="match status" value="1"/>
</dbReference>
<dbReference type="FunFam" id="3.40.50.1360:FF:000001">
    <property type="entry name" value="Ribose-5-phosphate isomerase A"/>
    <property type="match status" value="1"/>
</dbReference>
<dbReference type="Gene3D" id="3.30.70.260">
    <property type="match status" value="1"/>
</dbReference>
<dbReference type="Gene3D" id="3.40.50.1360">
    <property type="match status" value="1"/>
</dbReference>
<dbReference type="HAMAP" id="MF_00170">
    <property type="entry name" value="Rib_5P_isom_A"/>
    <property type="match status" value="1"/>
</dbReference>
<dbReference type="InterPro" id="IPR037171">
    <property type="entry name" value="NagB/RpiA_transferase-like"/>
</dbReference>
<dbReference type="InterPro" id="IPR050262">
    <property type="entry name" value="Ribose-5P_isomerase"/>
</dbReference>
<dbReference type="InterPro" id="IPR020672">
    <property type="entry name" value="Ribose5P_isomerase_typA_subgr"/>
</dbReference>
<dbReference type="InterPro" id="IPR004788">
    <property type="entry name" value="Ribose5P_isomerase_type_A"/>
</dbReference>
<dbReference type="NCBIfam" id="NF001924">
    <property type="entry name" value="PRK00702.1"/>
    <property type="match status" value="1"/>
</dbReference>
<dbReference type="NCBIfam" id="TIGR00021">
    <property type="entry name" value="rpiA"/>
    <property type="match status" value="1"/>
</dbReference>
<dbReference type="PANTHER" id="PTHR43748">
    <property type="entry name" value="RIBOSE-5-PHOSPHATE ISOMERASE 3, CHLOROPLASTIC-RELATED"/>
    <property type="match status" value="1"/>
</dbReference>
<dbReference type="PANTHER" id="PTHR43748:SF3">
    <property type="entry name" value="RIBOSE-5-PHOSPHATE ISOMERASE 3, CHLOROPLASTIC-RELATED"/>
    <property type="match status" value="1"/>
</dbReference>
<dbReference type="Pfam" id="PF06026">
    <property type="entry name" value="Rib_5-P_isom_A"/>
    <property type="match status" value="1"/>
</dbReference>
<dbReference type="SUPFAM" id="SSF75445">
    <property type="entry name" value="D-ribose-5-phosphate isomerase (RpiA), lid domain"/>
    <property type="match status" value="1"/>
</dbReference>
<dbReference type="SUPFAM" id="SSF100950">
    <property type="entry name" value="NagB/RpiA/CoA transferase-like"/>
    <property type="match status" value="1"/>
</dbReference>
<feature type="chain" id="PRO_1000071587" description="Ribose-5-phosphate isomerase A">
    <location>
        <begin position="1"/>
        <end position="231"/>
    </location>
</feature>
<feature type="active site" description="Proton acceptor" evidence="1">
    <location>
        <position position="105"/>
    </location>
</feature>
<feature type="binding site" evidence="1">
    <location>
        <begin position="28"/>
        <end position="31"/>
    </location>
    <ligand>
        <name>substrate</name>
    </ligand>
</feature>
<feature type="binding site" evidence="1">
    <location>
        <begin position="83"/>
        <end position="86"/>
    </location>
    <ligand>
        <name>substrate</name>
    </ligand>
</feature>
<feature type="binding site" evidence="1">
    <location>
        <begin position="96"/>
        <end position="99"/>
    </location>
    <ligand>
        <name>substrate</name>
    </ligand>
</feature>
<feature type="binding site" evidence="1">
    <location>
        <position position="123"/>
    </location>
    <ligand>
        <name>substrate</name>
    </ligand>
</feature>
<organism>
    <name type="scientific">Parvibaculum lavamentivorans (strain DS-1 / DSM 13023 / NCIMB 13966)</name>
    <dbReference type="NCBI Taxonomy" id="402881"/>
    <lineage>
        <taxon>Bacteria</taxon>
        <taxon>Pseudomonadati</taxon>
        <taxon>Pseudomonadota</taxon>
        <taxon>Alphaproteobacteria</taxon>
        <taxon>Hyphomicrobiales</taxon>
        <taxon>Parvibaculaceae</taxon>
        <taxon>Parvibaculum</taxon>
    </lineage>
</organism>
<comment type="function">
    <text evidence="1">Catalyzes the reversible conversion of ribose-5-phosphate to ribulose 5-phosphate.</text>
</comment>
<comment type="catalytic activity">
    <reaction evidence="1">
        <text>aldehydo-D-ribose 5-phosphate = D-ribulose 5-phosphate</text>
        <dbReference type="Rhea" id="RHEA:14657"/>
        <dbReference type="ChEBI" id="CHEBI:58121"/>
        <dbReference type="ChEBI" id="CHEBI:58273"/>
        <dbReference type="EC" id="5.3.1.6"/>
    </reaction>
</comment>
<comment type="pathway">
    <text evidence="1">Carbohydrate degradation; pentose phosphate pathway; D-ribose 5-phosphate from D-ribulose 5-phosphate (non-oxidative stage): step 1/1.</text>
</comment>
<comment type="subunit">
    <text evidence="1">Homodimer.</text>
</comment>
<comment type="similarity">
    <text evidence="1">Belongs to the ribose 5-phosphate isomerase family.</text>
</comment>
<reference key="1">
    <citation type="journal article" date="2011" name="Stand. Genomic Sci.">
        <title>Complete genome sequence of Parvibaculum lavamentivorans type strain (DS-1(T)).</title>
        <authorList>
            <person name="Schleheck D."/>
            <person name="Weiss M."/>
            <person name="Pitluck S."/>
            <person name="Bruce D."/>
            <person name="Land M.L."/>
            <person name="Han S."/>
            <person name="Saunders E."/>
            <person name="Tapia R."/>
            <person name="Detter C."/>
            <person name="Brettin T."/>
            <person name="Han J."/>
            <person name="Woyke T."/>
            <person name="Goodwin L."/>
            <person name="Pennacchio L."/>
            <person name="Nolan M."/>
            <person name="Cook A.M."/>
            <person name="Kjelleberg S."/>
            <person name="Thomas T."/>
        </authorList>
    </citation>
    <scope>NUCLEOTIDE SEQUENCE [LARGE SCALE GENOMIC DNA]</scope>
    <source>
        <strain>DS-1 / DSM 13023 / NCIMB 13966</strain>
    </source>
</reference>
<name>RPIA_PARL1</name>